<gene>
    <name evidence="1" type="primary">rplE</name>
    <name type="ordered locus">Jann_0603</name>
</gene>
<comment type="function">
    <text evidence="1">This is one of the proteins that bind and probably mediate the attachment of the 5S RNA into the large ribosomal subunit, where it forms part of the central protuberance. In the 70S ribosome it contacts protein S13 of the 30S subunit (bridge B1b), connecting the 2 subunits; this bridge is implicated in subunit movement. Contacts the P site tRNA; the 5S rRNA and some of its associated proteins might help stabilize positioning of ribosome-bound tRNAs.</text>
</comment>
<comment type="subunit">
    <text evidence="1">Part of the 50S ribosomal subunit; part of the 5S rRNA/L5/L18/L25 subcomplex. Contacts the 5S rRNA and the P site tRNA. Forms a bridge to the 30S subunit in the 70S ribosome.</text>
</comment>
<comment type="similarity">
    <text evidence="1">Belongs to the universal ribosomal protein uL5 family.</text>
</comment>
<keyword id="KW-1185">Reference proteome</keyword>
<keyword id="KW-0687">Ribonucleoprotein</keyword>
<keyword id="KW-0689">Ribosomal protein</keyword>
<keyword id="KW-0694">RNA-binding</keyword>
<keyword id="KW-0699">rRNA-binding</keyword>
<keyword id="KW-0820">tRNA-binding</keyword>
<name>RL5_JANSC</name>
<protein>
    <recommendedName>
        <fullName evidence="1">Large ribosomal subunit protein uL5</fullName>
    </recommendedName>
    <alternativeName>
        <fullName evidence="2">50S ribosomal protein L5</fullName>
    </alternativeName>
</protein>
<organism>
    <name type="scientific">Jannaschia sp. (strain CCS1)</name>
    <dbReference type="NCBI Taxonomy" id="290400"/>
    <lineage>
        <taxon>Bacteria</taxon>
        <taxon>Pseudomonadati</taxon>
        <taxon>Pseudomonadota</taxon>
        <taxon>Alphaproteobacteria</taxon>
        <taxon>Rhodobacterales</taxon>
        <taxon>Roseobacteraceae</taxon>
        <taxon>Jannaschia</taxon>
    </lineage>
</organism>
<evidence type="ECO:0000255" key="1">
    <source>
        <dbReference type="HAMAP-Rule" id="MF_01333"/>
    </source>
</evidence>
<evidence type="ECO:0000305" key="2"/>
<feature type="chain" id="PRO_0000243010" description="Large ribosomal subunit protein uL5">
    <location>
        <begin position="1"/>
        <end position="186"/>
    </location>
</feature>
<sequence>MLDTANYTPRLKAAFSETIKAAMKEEFGYKNDMQIPRLEKIVLNIGSGAESVRDTKKAKSAQEDLTAIAGQHAVVTKAKKSIAGFRLREEHPVGAKVTLRGDRMYDFLDRLTTIAMPRIRDFRGVKPSFDGRGNFAMGMKEHIVFPEINFDKIDVAWGMDIIIVTTANTDAEAKSLLAHFNMPFNA</sequence>
<proteinExistence type="inferred from homology"/>
<reference key="1">
    <citation type="submission" date="2006-02" db="EMBL/GenBank/DDBJ databases">
        <title>Complete sequence of chromosome of Jannaschia sp. CCS1.</title>
        <authorList>
            <consortium name="US DOE Joint Genome Institute"/>
            <person name="Copeland A."/>
            <person name="Lucas S."/>
            <person name="Lapidus A."/>
            <person name="Barry K."/>
            <person name="Detter J.C."/>
            <person name="Glavina del Rio T."/>
            <person name="Hammon N."/>
            <person name="Israni S."/>
            <person name="Pitluck S."/>
            <person name="Brettin T."/>
            <person name="Bruce D."/>
            <person name="Han C."/>
            <person name="Tapia R."/>
            <person name="Gilna P."/>
            <person name="Chertkov O."/>
            <person name="Saunders E."/>
            <person name="Schmutz J."/>
            <person name="Larimer F."/>
            <person name="Land M."/>
            <person name="Kyrpides N."/>
            <person name="Lykidis A."/>
            <person name="Moran M.A."/>
            <person name="Belas R."/>
            <person name="Ye W."/>
            <person name="Buchan A."/>
            <person name="Gonzalez J.M."/>
            <person name="Schell M.A."/>
            <person name="Richardson P."/>
        </authorList>
    </citation>
    <scope>NUCLEOTIDE SEQUENCE [LARGE SCALE GENOMIC DNA]</scope>
    <source>
        <strain>CCS1</strain>
    </source>
</reference>
<accession>Q28UU2</accession>
<dbReference type="EMBL" id="CP000264">
    <property type="protein sequence ID" value="ABD53520.1"/>
    <property type="molecule type" value="Genomic_DNA"/>
</dbReference>
<dbReference type="RefSeq" id="WP_011453728.1">
    <property type="nucleotide sequence ID" value="NC_007802.1"/>
</dbReference>
<dbReference type="SMR" id="Q28UU2"/>
<dbReference type="STRING" id="290400.Jann_0603"/>
<dbReference type="KEGG" id="jan:Jann_0603"/>
<dbReference type="eggNOG" id="COG0094">
    <property type="taxonomic scope" value="Bacteria"/>
</dbReference>
<dbReference type="HOGENOM" id="CLU_061015_2_1_5"/>
<dbReference type="OrthoDB" id="9806626at2"/>
<dbReference type="Proteomes" id="UP000008326">
    <property type="component" value="Chromosome"/>
</dbReference>
<dbReference type="GO" id="GO:1990904">
    <property type="term" value="C:ribonucleoprotein complex"/>
    <property type="evidence" value="ECO:0007669"/>
    <property type="project" value="UniProtKB-KW"/>
</dbReference>
<dbReference type="GO" id="GO:0005840">
    <property type="term" value="C:ribosome"/>
    <property type="evidence" value="ECO:0007669"/>
    <property type="project" value="UniProtKB-KW"/>
</dbReference>
<dbReference type="GO" id="GO:0019843">
    <property type="term" value="F:rRNA binding"/>
    <property type="evidence" value="ECO:0007669"/>
    <property type="project" value="UniProtKB-UniRule"/>
</dbReference>
<dbReference type="GO" id="GO:0003735">
    <property type="term" value="F:structural constituent of ribosome"/>
    <property type="evidence" value="ECO:0007669"/>
    <property type="project" value="InterPro"/>
</dbReference>
<dbReference type="GO" id="GO:0000049">
    <property type="term" value="F:tRNA binding"/>
    <property type="evidence" value="ECO:0007669"/>
    <property type="project" value="UniProtKB-UniRule"/>
</dbReference>
<dbReference type="GO" id="GO:0006412">
    <property type="term" value="P:translation"/>
    <property type="evidence" value="ECO:0007669"/>
    <property type="project" value="UniProtKB-UniRule"/>
</dbReference>
<dbReference type="FunFam" id="3.30.1440.10:FF:000001">
    <property type="entry name" value="50S ribosomal protein L5"/>
    <property type="match status" value="1"/>
</dbReference>
<dbReference type="Gene3D" id="3.30.1440.10">
    <property type="match status" value="1"/>
</dbReference>
<dbReference type="HAMAP" id="MF_01333_B">
    <property type="entry name" value="Ribosomal_uL5_B"/>
    <property type="match status" value="1"/>
</dbReference>
<dbReference type="InterPro" id="IPR002132">
    <property type="entry name" value="Ribosomal_uL5"/>
</dbReference>
<dbReference type="InterPro" id="IPR020930">
    <property type="entry name" value="Ribosomal_uL5_bac-type"/>
</dbReference>
<dbReference type="InterPro" id="IPR031309">
    <property type="entry name" value="Ribosomal_uL5_C"/>
</dbReference>
<dbReference type="InterPro" id="IPR020929">
    <property type="entry name" value="Ribosomal_uL5_CS"/>
</dbReference>
<dbReference type="InterPro" id="IPR022803">
    <property type="entry name" value="Ribosomal_uL5_dom_sf"/>
</dbReference>
<dbReference type="InterPro" id="IPR031310">
    <property type="entry name" value="Ribosomal_uL5_N"/>
</dbReference>
<dbReference type="NCBIfam" id="NF000585">
    <property type="entry name" value="PRK00010.1"/>
    <property type="match status" value="1"/>
</dbReference>
<dbReference type="PANTHER" id="PTHR11994">
    <property type="entry name" value="60S RIBOSOMAL PROTEIN L11-RELATED"/>
    <property type="match status" value="1"/>
</dbReference>
<dbReference type="Pfam" id="PF00281">
    <property type="entry name" value="Ribosomal_L5"/>
    <property type="match status" value="1"/>
</dbReference>
<dbReference type="Pfam" id="PF00673">
    <property type="entry name" value="Ribosomal_L5_C"/>
    <property type="match status" value="1"/>
</dbReference>
<dbReference type="PIRSF" id="PIRSF002161">
    <property type="entry name" value="Ribosomal_L5"/>
    <property type="match status" value="1"/>
</dbReference>
<dbReference type="SUPFAM" id="SSF55282">
    <property type="entry name" value="RL5-like"/>
    <property type="match status" value="1"/>
</dbReference>
<dbReference type="PROSITE" id="PS00358">
    <property type="entry name" value="RIBOSOMAL_L5"/>
    <property type="match status" value="1"/>
</dbReference>